<name>Y528_ACIET</name>
<accession>B9MCK8</accession>
<proteinExistence type="inferred from homology"/>
<dbReference type="EC" id="1.14.11.-" evidence="1"/>
<dbReference type="EMBL" id="CP001392">
    <property type="protein sequence ID" value="ACM32008.1"/>
    <property type="molecule type" value="Genomic_DNA"/>
</dbReference>
<dbReference type="RefSeq" id="WP_012655555.1">
    <property type="nucleotide sequence ID" value="NC_011992.1"/>
</dbReference>
<dbReference type="SMR" id="B9MCK8"/>
<dbReference type="KEGG" id="dia:Dtpsy_0528"/>
<dbReference type="eggNOG" id="COG3128">
    <property type="taxonomic scope" value="Bacteria"/>
</dbReference>
<dbReference type="HOGENOM" id="CLU_106663_0_0_4"/>
<dbReference type="Proteomes" id="UP000000450">
    <property type="component" value="Chromosome"/>
</dbReference>
<dbReference type="GO" id="GO:0016706">
    <property type="term" value="F:2-oxoglutarate-dependent dioxygenase activity"/>
    <property type="evidence" value="ECO:0007669"/>
    <property type="project" value="UniProtKB-UniRule"/>
</dbReference>
<dbReference type="GO" id="GO:0005506">
    <property type="term" value="F:iron ion binding"/>
    <property type="evidence" value="ECO:0007669"/>
    <property type="project" value="UniProtKB-UniRule"/>
</dbReference>
<dbReference type="GO" id="GO:0031418">
    <property type="term" value="F:L-ascorbic acid binding"/>
    <property type="evidence" value="ECO:0007669"/>
    <property type="project" value="UniProtKB-KW"/>
</dbReference>
<dbReference type="GO" id="GO:0006974">
    <property type="term" value="P:DNA damage response"/>
    <property type="evidence" value="ECO:0007669"/>
    <property type="project" value="TreeGrafter"/>
</dbReference>
<dbReference type="GO" id="GO:0006879">
    <property type="term" value="P:intracellular iron ion homeostasis"/>
    <property type="evidence" value="ECO:0007669"/>
    <property type="project" value="TreeGrafter"/>
</dbReference>
<dbReference type="Gene3D" id="2.60.120.620">
    <property type="entry name" value="q2cbj1_9rhob like domain"/>
    <property type="match status" value="1"/>
</dbReference>
<dbReference type="Gene3D" id="4.10.860.20">
    <property type="entry name" value="Rabenosyn, Rab binding domain"/>
    <property type="match status" value="1"/>
</dbReference>
<dbReference type="HAMAP" id="MF_00657">
    <property type="entry name" value="Hydroxyl_YbiX"/>
    <property type="match status" value="1"/>
</dbReference>
<dbReference type="InterPro" id="IPR005123">
    <property type="entry name" value="Oxoglu/Fe-dep_dioxygenase_dom"/>
</dbReference>
<dbReference type="InterPro" id="IPR041097">
    <property type="entry name" value="PKHD_C"/>
</dbReference>
<dbReference type="InterPro" id="IPR023550">
    <property type="entry name" value="PKHD_hydroxylase"/>
</dbReference>
<dbReference type="InterPro" id="IPR006620">
    <property type="entry name" value="Pro_4_hyd_alph"/>
</dbReference>
<dbReference type="InterPro" id="IPR044862">
    <property type="entry name" value="Pro_4_hyd_alph_FE2OG_OXY"/>
</dbReference>
<dbReference type="NCBIfam" id="NF003974">
    <property type="entry name" value="PRK05467.1-3"/>
    <property type="match status" value="1"/>
</dbReference>
<dbReference type="NCBIfam" id="NF003975">
    <property type="entry name" value="PRK05467.1-4"/>
    <property type="match status" value="1"/>
</dbReference>
<dbReference type="PANTHER" id="PTHR41536">
    <property type="entry name" value="PKHD-TYPE HYDROXYLASE YBIX"/>
    <property type="match status" value="1"/>
</dbReference>
<dbReference type="PANTHER" id="PTHR41536:SF1">
    <property type="entry name" value="PKHD-TYPE HYDROXYLASE YBIX"/>
    <property type="match status" value="1"/>
</dbReference>
<dbReference type="Pfam" id="PF13640">
    <property type="entry name" value="2OG-FeII_Oxy_3"/>
    <property type="match status" value="1"/>
</dbReference>
<dbReference type="Pfam" id="PF18331">
    <property type="entry name" value="PKHD_C"/>
    <property type="match status" value="1"/>
</dbReference>
<dbReference type="SMART" id="SM00702">
    <property type="entry name" value="P4Hc"/>
    <property type="match status" value="1"/>
</dbReference>
<dbReference type="SUPFAM" id="SSF51197">
    <property type="entry name" value="Clavaminate synthase-like"/>
    <property type="match status" value="1"/>
</dbReference>
<dbReference type="PROSITE" id="PS51471">
    <property type="entry name" value="FE2OG_OXY"/>
    <property type="match status" value="1"/>
</dbReference>
<protein>
    <recommendedName>
        <fullName evidence="1">PKHD-type hydroxylase Dtpsy_0528</fullName>
        <ecNumber evidence="1">1.14.11.-</ecNumber>
    </recommendedName>
</protein>
<evidence type="ECO:0000255" key="1">
    <source>
        <dbReference type="HAMAP-Rule" id="MF_00657"/>
    </source>
</evidence>
<reference key="1">
    <citation type="submission" date="2009-01" db="EMBL/GenBank/DDBJ databases">
        <title>Complete sequence of Diaphorobacter sp. TPSY.</title>
        <authorList>
            <consortium name="US DOE Joint Genome Institute"/>
            <person name="Lucas S."/>
            <person name="Copeland A."/>
            <person name="Lapidus A."/>
            <person name="Glavina del Rio T."/>
            <person name="Tice H."/>
            <person name="Bruce D."/>
            <person name="Goodwin L."/>
            <person name="Pitluck S."/>
            <person name="Chertkov O."/>
            <person name="Brettin T."/>
            <person name="Detter J.C."/>
            <person name="Han C."/>
            <person name="Larimer F."/>
            <person name="Land M."/>
            <person name="Hauser L."/>
            <person name="Kyrpides N."/>
            <person name="Mikhailova N."/>
            <person name="Coates J.D."/>
        </authorList>
    </citation>
    <scope>NUCLEOTIDE SEQUENCE [LARGE SCALE GENOMIC DNA]</scope>
    <source>
        <strain>TPSY</strain>
    </source>
</reference>
<comment type="cofactor">
    <cofactor evidence="1">
        <name>Fe(2+)</name>
        <dbReference type="ChEBI" id="CHEBI:29033"/>
    </cofactor>
    <text evidence="1">Binds 1 Fe(2+) ion per subunit.</text>
</comment>
<comment type="cofactor">
    <cofactor evidence="1">
        <name>L-ascorbate</name>
        <dbReference type="ChEBI" id="CHEBI:38290"/>
    </cofactor>
</comment>
<organism>
    <name type="scientific">Acidovorax ebreus (strain TPSY)</name>
    <name type="common">Diaphorobacter sp. (strain TPSY)</name>
    <dbReference type="NCBI Taxonomy" id="535289"/>
    <lineage>
        <taxon>Bacteria</taxon>
        <taxon>Pseudomonadati</taxon>
        <taxon>Pseudomonadota</taxon>
        <taxon>Betaproteobacteria</taxon>
        <taxon>Burkholderiales</taxon>
        <taxon>Comamonadaceae</taxon>
        <taxon>Diaphorobacter</taxon>
    </lineage>
</organism>
<sequence length="227" mass="25103">MLISIDQVLSKTEVRDLRAQLDAAAWEDGAATAGTLAKSVKRNQQINDGSELCQRLGQHILRRLSSTPLFISAALPRTIYPPKFNRYADGGTYGAHVDSALMFLPGSHQQMRTDLSATLFLAEPEEYDGGELEVEGPFGVQAVKLAAGDMVLYPSSSLHRVTPVTRGARVASFFWIESLVQDEGERTLLFDLDQSIQQLTPLVAPDDPRLVQLTGVYHNLLRRWARP</sequence>
<keyword id="KW-0223">Dioxygenase</keyword>
<keyword id="KW-0408">Iron</keyword>
<keyword id="KW-0479">Metal-binding</keyword>
<keyword id="KW-0560">Oxidoreductase</keyword>
<keyword id="KW-1185">Reference proteome</keyword>
<keyword id="KW-0847">Vitamin C</keyword>
<gene>
    <name type="ordered locus">Dtpsy_0528</name>
</gene>
<feature type="chain" id="PRO_1000147523" description="PKHD-type hydroxylase Dtpsy_0528">
    <location>
        <begin position="1"/>
        <end position="227"/>
    </location>
</feature>
<feature type="domain" description="Fe2OG dioxygenase" evidence="1">
    <location>
        <begin position="78"/>
        <end position="178"/>
    </location>
</feature>
<feature type="binding site" evidence="1">
    <location>
        <position position="96"/>
    </location>
    <ligand>
        <name>Fe cation</name>
        <dbReference type="ChEBI" id="CHEBI:24875"/>
    </ligand>
</feature>
<feature type="binding site" evidence="1">
    <location>
        <position position="98"/>
    </location>
    <ligand>
        <name>Fe cation</name>
        <dbReference type="ChEBI" id="CHEBI:24875"/>
    </ligand>
</feature>
<feature type="binding site" evidence="1">
    <location>
        <position position="159"/>
    </location>
    <ligand>
        <name>Fe cation</name>
        <dbReference type="ChEBI" id="CHEBI:24875"/>
    </ligand>
</feature>
<feature type="binding site" evidence="1">
    <location>
        <position position="169"/>
    </location>
    <ligand>
        <name>2-oxoglutarate</name>
        <dbReference type="ChEBI" id="CHEBI:16810"/>
    </ligand>
</feature>